<protein>
    <recommendedName>
        <fullName evidence="2">ATP nucleosidase Cap17</fullName>
        <ecNumber evidence="1">3.5.99.-</ecNumber>
    </recommendedName>
</protein>
<name>CAP17_ECOKT</name>
<proteinExistence type="evidence at protein level"/>
<evidence type="ECO:0000269" key="1">
    <source>
    </source>
</evidence>
<evidence type="ECO:0000303" key="2">
    <source>
    </source>
</evidence>
<evidence type="ECO:0000305" key="3"/>
<evidence type="ECO:0000305" key="4">
    <source>
    </source>
</evidence>
<evidence type="ECO:0000312" key="5">
    <source>
        <dbReference type="EMBL" id="ELC78143.1"/>
    </source>
</evidence>
<sequence length="505" mass="54398">MTNTNNEYVLIAGSISKNTEKLYIDRAHSFVRALTKSILDANVGLVVYLAGEPVNENGALLTFDWTIVKEAVDLMENYTPAHQLKIVTSRSAMREKMSEENRMLIRKLQVARFADVSYLDDDLITGGNIGSEQVDAATAMIALGGGKGVSDRASKMRKANHPILPFDLELGGICDDGKGALGLHAHFYAEPLSMFPCTGEAVKNQLDTLSLQEPYYGLERLSEIAVELLKAEWAAQQLLHTPSVLILTALPVELAAAKKVFGIADDESPRLTSNGIHFWSTSIQRSDGPVTGIVASFASAGNVNASAITTMLLSEFKPQKVLMMGIAAGLREKMVLGEVIISERVIYYESAAALEGGKFAPRPEILCLHMPTKQNLNTYLATTSLSARLGERAQAIGLEMPVNSQAGDVAAGIIVSSATIASGELLIRDPALLERFRSLHDKACVAEMEAYGVFDACEKQGVPALIVRGISDFGDSTKDDAFHSIASVAAAIITADYLQHGWIRA</sequence>
<comment type="function">
    <text evidence="1 2 4">Effector protein with (d)ATP degrading activity of a CBASS antivirus system (PubMed:37595565). CBASS (cyclic oligonucleotide-based antiphage signaling system) provides immunity against bacteriophage (PubMed:37595565). A CD-NTase protein synthesizes cyclic nucleotides in response to infection; these serve as specific second messenger signals (PubMed:37595565). The signals activate a diverse range of effectors, leading to bacterial cell death and thus abortive phage infection (PubMed:37595565). A type III CBASS system (PubMed:37595565). Expression of this CBASS system (Cap18-Cap6-Cap7-CdnC-CapW-Cap17) in a susceptible E.coli (strain MG1655) confers resistance to bacteriophage P1, leading to cell lysis. By 50 minutes post-infection, ATP levels are markedly reduced while dATP has been eliminated (PubMed:37595565). The C-terminal purine nucleoside phosphorylase (PNP) domain cleaves the N-glycosidic bond of (d)ATP to release adenine and a sugar triphosphate; has no activity on other (d)NTPs, nor on DNA or RNA. In vivo during phage infection has pleoitropic effects on nucleotide accumulation (PubMed:37595565). This protein may be activated by the cognate CD-NTase (CdnC) (Probable) (PubMed:37595565).</text>
</comment>
<comment type="catalytic activity">
    <reaction evidence="1">
        <text>ATP + H2O = D-ribose 5-triphosphate + adenine</text>
        <dbReference type="Rhea" id="RHEA:44164"/>
        <dbReference type="ChEBI" id="CHEBI:15377"/>
        <dbReference type="ChEBI" id="CHEBI:16708"/>
        <dbReference type="ChEBI" id="CHEBI:30616"/>
        <dbReference type="ChEBI" id="CHEBI:91013"/>
    </reaction>
    <physiologicalReaction direction="left-to-right" evidence="1">
        <dbReference type="Rhea" id="RHEA:44165"/>
    </physiologicalReaction>
</comment>
<comment type="catalytic activity">
    <reaction evidence="1">
        <text>dATP + H2O = 2-deoxyribose 5-triphosphate + adenine</text>
        <dbReference type="Rhea" id="RHEA:77215"/>
        <dbReference type="ChEBI" id="CHEBI:15377"/>
        <dbReference type="ChEBI" id="CHEBI:16708"/>
        <dbReference type="ChEBI" id="CHEBI:61404"/>
        <dbReference type="ChEBI" id="CHEBI:72943"/>
    </reaction>
    <physiologicalReaction direction="left-to-right" evidence="1">
        <dbReference type="Rhea" id="RHEA:77216"/>
    </physiologicalReaction>
</comment>
<comment type="domain">
    <text evidence="1">Has 2 domains, an N-terminal domain probably involved in sensing cyclic nucleotides and C-terminal purine nucleoside phosphorylase (PNP) domain; the PNP domain has ATP nucleosidase activity (PubMed:37595565). Expression of the C-terminal domain alone stops bacterial growth without cell lysis in E.coli (PubMed:37595565).</text>
</comment>
<comment type="similarity">
    <text evidence="3">Belongs to the Cap17 family.</text>
</comment>
<dbReference type="EC" id="3.5.99.-" evidence="1"/>
<dbReference type="EMBL" id="ANTE01000038">
    <property type="protein sequence ID" value="ELC78143.1"/>
    <property type="molecule type" value="Genomic_DNA"/>
</dbReference>
<dbReference type="RefSeq" id="WP_001534695.1">
    <property type="nucleotide sequence ID" value="NZ_KB732426.1"/>
</dbReference>
<dbReference type="SMR" id="P0DX71"/>
<dbReference type="GO" id="GO:0005829">
    <property type="term" value="C:cytosol"/>
    <property type="evidence" value="ECO:0007669"/>
    <property type="project" value="TreeGrafter"/>
</dbReference>
<dbReference type="GO" id="GO:0008782">
    <property type="term" value="F:adenosylhomocysteine nucleosidase activity"/>
    <property type="evidence" value="ECO:0007669"/>
    <property type="project" value="TreeGrafter"/>
</dbReference>
<dbReference type="GO" id="GO:0008930">
    <property type="term" value="F:methylthioadenosine nucleosidase activity"/>
    <property type="evidence" value="ECO:0007669"/>
    <property type="project" value="TreeGrafter"/>
</dbReference>
<dbReference type="GO" id="GO:0051607">
    <property type="term" value="P:defense response to virus"/>
    <property type="evidence" value="ECO:0007669"/>
    <property type="project" value="UniProtKB-KW"/>
</dbReference>
<dbReference type="GO" id="GO:0019284">
    <property type="term" value="P:L-methionine salvage from S-adenosylmethionine"/>
    <property type="evidence" value="ECO:0007669"/>
    <property type="project" value="TreeGrafter"/>
</dbReference>
<dbReference type="GO" id="GO:0009116">
    <property type="term" value="P:nucleoside metabolic process"/>
    <property type="evidence" value="ECO:0007669"/>
    <property type="project" value="InterPro"/>
</dbReference>
<dbReference type="CDD" id="cd09008">
    <property type="entry name" value="MTAN"/>
    <property type="match status" value="1"/>
</dbReference>
<dbReference type="Gene3D" id="3.40.50.1580">
    <property type="entry name" value="Nucleoside phosphorylase domain"/>
    <property type="match status" value="1"/>
</dbReference>
<dbReference type="InterPro" id="IPR041327">
    <property type="entry name" value="Cap17-like_N"/>
</dbReference>
<dbReference type="InterPro" id="IPR000845">
    <property type="entry name" value="Nucleoside_phosphorylase_d"/>
</dbReference>
<dbReference type="InterPro" id="IPR035994">
    <property type="entry name" value="Nucleoside_phosphorylase_sf"/>
</dbReference>
<dbReference type="PANTHER" id="PTHR46832">
    <property type="entry name" value="5'-METHYLTHIOADENOSINE/S-ADENOSYLHOMOCYSTEINE NUCLEOSIDASE"/>
    <property type="match status" value="1"/>
</dbReference>
<dbReference type="PANTHER" id="PTHR46832:SF1">
    <property type="entry name" value="5'-METHYLTHIOADENOSINE_S-ADENOSYLHOMOCYSTEINE NUCLEOSIDASE"/>
    <property type="match status" value="1"/>
</dbReference>
<dbReference type="Pfam" id="PF18178">
    <property type="entry name" value="Cap17-like_N"/>
    <property type="match status" value="1"/>
</dbReference>
<dbReference type="Pfam" id="PF01048">
    <property type="entry name" value="PNP_UDP_1"/>
    <property type="match status" value="1"/>
</dbReference>
<dbReference type="SUPFAM" id="SSF53167">
    <property type="entry name" value="Purine and uridine phosphorylases"/>
    <property type="match status" value="1"/>
</dbReference>
<feature type="chain" id="PRO_0000459340" description="ATP nucleosidase Cap17">
    <location>
        <begin position="1"/>
        <end position="505"/>
    </location>
</feature>
<feature type="region of interest" description="Cyclic oligonucleotide sensing-domain" evidence="4">
    <location>
        <begin position="1"/>
        <end position="229"/>
    </location>
</feature>
<feature type="region of interest" description="Purine nucleoside phosphorylase domain" evidence="4">
    <location>
        <begin position="239"/>
        <end position="505"/>
    </location>
</feature>
<feature type="mutagenesis site" description="Loss of (d)ATP hydrolysis, CBASS no longer confers viral defense, (d)ATP levels are wild-type in P1 infected cells." evidence="1">
    <original>D</original>
    <variation>A</variation>
    <location>
        <position position="472"/>
    </location>
</feature>
<keyword id="KW-0051">Antiviral defense</keyword>
<keyword id="KW-0378">Hydrolase</keyword>
<gene>
    <name evidence="2" type="primary">cap17</name>
    <name evidence="5" type="ORF">A13M_04334</name>
</gene>
<organism>
    <name type="scientific">Escherichia coli (strain KTE188)</name>
    <dbReference type="NCBI Taxonomy" id="1181734"/>
    <lineage>
        <taxon>Bacteria</taxon>
        <taxon>Pseudomonadati</taxon>
        <taxon>Pseudomonadota</taxon>
        <taxon>Gammaproteobacteria</taxon>
        <taxon>Enterobacterales</taxon>
        <taxon>Enterobacteriaceae</taxon>
        <taxon>Escherichia</taxon>
    </lineage>
</organism>
<accession>P0DX71</accession>
<reference evidence="5" key="1">
    <citation type="submission" date="2012-12" db="EMBL/GenBank/DDBJ databases">
        <title>The Genome Sequence of Escherichia coli KTE188.</title>
        <authorList>
            <person name="Feldgarden M."/>
            <person name="Nielsen K.L."/>
            <person name="Frimodt-Moller N."/>
            <person name="Andersen P.S."/>
            <person name="Walker B."/>
            <person name="Young S.K."/>
            <person name="Zeng Q."/>
            <person name="Gargeya S."/>
            <person name="Fitzgerald M."/>
            <person name="Haas B."/>
            <person name="Abouelleil A."/>
            <person name="Alvarado L."/>
            <person name="Arachchi H.M."/>
            <person name="Berlin A.M."/>
            <person name="Chapman S.B."/>
            <person name="Dewar J."/>
            <person name="Goldberg J."/>
            <person name="Griggs A."/>
            <person name="Gujja S."/>
            <person name="Hansen M."/>
            <person name="Howarth C."/>
            <person name="Imamovic A."/>
            <person name="Larimer J."/>
            <person name="McCowan C."/>
            <person name="Murphy C."/>
            <person name="Neiman D."/>
            <person name="Pearson M."/>
            <person name="Priest M."/>
            <person name="Roberts A."/>
            <person name="Saif S."/>
            <person name="Shea T."/>
            <person name="Sisk P."/>
            <person name="Sykes S."/>
            <person name="Wortman J."/>
            <person name="Nusbaum C."/>
            <person name="Birren B."/>
        </authorList>
    </citation>
    <scope>NUCLEOTIDE SEQUENCE [LARGE SCALE GENOMIC DNA]</scope>
    <source>
        <strain>KTE188</strain>
    </source>
</reference>
<reference key="2">
    <citation type="journal article" date="2023" name="Cell">
        <title>A conserved family of immune effectors cleaves cellular ATP upon viral infection.</title>
        <authorList>
            <person name="Rousset F."/>
            <person name="Yirmiya E."/>
            <person name="Nesher S."/>
            <person name="Brandis A."/>
            <person name="Mehlman T."/>
            <person name="Itkin M."/>
            <person name="Malitsky S."/>
            <person name="Millman A."/>
            <person name="Melamed S."/>
            <person name="Sorek R."/>
        </authorList>
    </citation>
    <scope>FUNCTION</scope>
    <scope>FUNCTION IN VIRAL DEFENSE</scope>
    <scope>CATALYTIC ACTIVITY</scope>
    <scope>DOMAIN</scope>
    <scope>MUTAGENESIS OF ASP-472</scope>
    <source>
        <strain>KTE188</strain>
    </source>
</reference>